<comment type="function">
    <text evidence="1">Myoactive.</text>
</comment>
<comment type="subcellular location">
    <subcellularLocation>
        <location evidence="4">Secreted</location>
    </subcellularLocation>
</comment>
<comment type="tissue specificity">
    <text evidence="4">Expressed in the brain, subesophageal ganglion and in the retrocerebral complex (mainly corpora cardiaca).</text>
</comment>
<comment type="mass spectrometry"/>
<comment type="similarity">
    <text evidence="2">Belongs to the pyrokinin family.</text>
</comment>
<protein>
    <recommendedName>
        <fullName>Pyrokinin-6</fullName>
    </recommendedName>
    <alternativeName>
        <fullName>FXPRL-amide</fullName>
    </alternativeName>
</protein>
<evidence type="ECO:0000250" key="1">
    <source>
        <dbReference type="UniProtKB" id="P82693"/>
    </source>
</evidence>
<evidence type="ECO:0000255" key="2"/>
<evidence type="ECO:0000269" key="3">
    <source>
    </source>
</evidence>
<evidence type="ECO:0000269" key="4">
    <source ref="2"/>
</evidence>
<evidence type="ECO:0000305" key="5"/>
<accession>P84361</accession>
<organism>
    <name type="scientific">Neostylopyga rhombifolia</name>
    <name type="common">Harlequin cockroach</name>
    <dbReference type="NCBI Taxonomy" id="304879"/>
    <lineage>
        <taxon>Eukaryota</taxon>
        <taxon>Metazoa</taxon>
        <taxon>Ecdysozoa</taxon>
        <taxon>Arthropoda</taxon>
        <taxon>Hexapoda</taxon>
        <taxon>Insecta</taxon>
        <taxon>Pterygota</taxon>
        <taxon>Neoptera</taxon>
        <taxon>Polyneoptera</taxon>
        <taxon>Dictyoptera</taxon>
        <taxon>Blattodea</taxon>
        <taxon>Blattoidea</taxon>
        <taxon>Blattidae</taxon>
        <taxon>Blattinae</taxon>
        <taxon>Neostylopyga</taxon>
    </lineage>
</organism>
<feature type="peptide" id="PRO_0000044358" description="Pyrokinin-6">
    <location>
        <begin position="1"/>
        <end position="14"/>
    </location>
</feature>
<feature type="modified residue" description="Leucine amide" evidence="3">
    <location>
        <position position="14"/>
    </location>
</feature>
<name>PPK6_NEORO</name>
<sequence>SDPEVPGMWFGPRL</sequence>
<proteinExistence type="evidence at protein level"/>
<dbReference type="GO" id="GO:0005576">
    <property type="term" value="C:extracellular region"/>
    <property type="evidence" value="ECO:0007669"/>
    <property type="project" value="UniProtKB-SubCell"/>
</dbReference>
<dbReference type="GO" id="GO:0005184">
    <property type="term" value="F:neuropeptide hormone activity"/>
    <property type="evidence" value="ECO:0007669"/>
    <property type="project" value="InterPro"/>
</dbReference>
<dbReference type="GO" id="GO:0007218">
    <property type="term" value="P:neuropeptide signaling pathway"/>
    <property type="evidence" value="ECO:0007669"/>
    <property type="project" value="UniProtKB-KW"/>
</dbReference>
<dbReference type="InterPro" id="IPR001484">
    <property type="entry name" value="Pyrokinin_CS"/>
</dbReference>
<dbReference type="PROSITE" id="PS00539">
    <property type="entry name" value="PYROKININ"/>
    <property type="match status" value="1"/>
</dbReference>
<keyword id="KW-0027">Amidation</keyword>
<keyword id="KW-0903">Direct protein sequencing</keyword>
<keyword id="KW-0527">Neuropeptide</keyword>
<keyword id="KW-0964">Secreted</keyword>
<reference evidence="5" key="1">
    <citation type="journal article" date="2005" name="Peptides">
        <title>Peptidomics of neurohemal organs from species of the cockroach family Blattidae: how do neuropeptides of closely related species differ?</title>
        <authorList>
            <person name="Predel R."/>
            <person name="Gaede G."/>
        </authorList>
    </citation>
    <scope>PROTEIN SEQUENCE</scope>
    <scope>MASS SPECTROMETRY</scope>
    <scope>AMIDATION AT LEU-14</scope>
    <source>
        <tissue evidence="3">Corpora allata</tissue>
    </source>
</reference>
<reference evidence="5" key="2">
    <citation type="submission" date="2004-11" db="UniProtKB">
        <authorList>
            <person name="Predel R."/>
            <person name="Gaede G."/>
        </authorList>
    </citation>
    <scope>SUBCELLULAR LOCATION</scope>
    <scope>TISSUE SPECIFICITY</scope>
</reference>